<reference key="1">
    <citation type="journal article" date="2004" name="J. Bacteriol.">
        <title>Comparative genomics of two Leptospira interrogans serovars reveals novel insights into physiology and pathogenesis.</title>
        <authorList>
            <person name="Nascimento A.L.T.O."/>
            <person name="Ko A.I."/>
            <person name="Martins E.A.L."/>
            <person name="Monteiro-Vitorello C.B."/>
            <person name="Ho P.L."/>
            <person name="Haake D.A."/>
            <person name="Verjovski-Almeida S."/>
            <person name="Hartskeerl R.A."/>
            <person name="Marques M.V."/>
            <person name="Oliveira M.C."/>
            <person name="Menck C.F.M."/>
            <person name="Leite L.C.C."/>
            <person name="Carrer H."/>
            <person name="Coutinho L.L."/>
            <person name="Degrave W.M."/>
            <person name="Dellagostin O.A."/>
            <person name="El-Dorry H."/>
            <person name="Ferro E.S."/>
            <person name="Ferro M.I.T."/>
            <person name="Furlan L.R."/>
            <person name="Gamberini M."/>
            <person name="Giglioti E.A."/>
            <person name="Goes-Neto A."/>
            <person name="Goldman G.H."/>
            <person name="Goldman M.H.S."/>
            <person name="Harakava R."/>
            <person name="Jeronimo S.M.B."/>
            <person name="Junqueira-de-Azevedo I.L.M."/>
            <person name="Kimura E.T."/>
            <person name="Kuramae E.E."/>
            <person name="Lemos E.G.M."/>
            <person name="Lemos M.V.F."/>
            <person name="Marino C.L."/>
            <person name="Nunes L.R."/>
            <person name="de Oliveira R.C."/>
            <person name="Pereira G.G."/>
            <person name="Reis M.S."/>
            <person name="Schriefer A."/>
            <person name="Siqueira W.J."/>
            <person name="Sommer P."/>
            <person name="Tsai S.M."/>
            <person name="Simpson A.J.G."/>
            <person name="Ferro J.A."/>
            <person name="Camargo L.E.A."/>
            <person name="Kitajima J.P."/>
            <person name="Setubal J.C."/>
            <person name="Van Sluys M.A."/>
        </authorList>
    </citation>
    <scope>NUCLEOTIDE SEQUENCE [LARGE SCALE GENOMIC DNA]</scope>
    <source>
        <strain>Fiocruz L1-130</strain>
    </source>
</reference>
<accession>P62347</accession>
<name>HIS2_LEPIC</name>
<dbReference type="EC" id="3.6.1.31" evidence="1"/>
<dbReference type="EMBL" id="AE016824">
    <property type="protein sequence ID" value="AAS72091.1"/>
    <property type="molecule type" value="Genomic_DNA"/>
</dbReference>
<dbReference type="RefSeq" id="WP_000394955.1">
    <property type="nucleotide sequence ID" value="NC_005824.1"/>
</dbReference>
<dbReference type="SMR" id="P62347"/>
<dbReference type="GeneID" id="61141257"/>
<dbReference type="KEGG" id="lic:LIC_20062"/>
<dbReference type="HOGENOM" id="CLU_123337_1_2_12"/>
<dbReference type="UniPathway" id="UPA00031">
    <property type="reaction ID" value="UER00007"/>
</dbReference>
<dbReference type="Proteomes" id="UP000007037">
    <property type="component" value="Chromosome II"/>
</dbReference>
<dbReference type="GO" id="GO:0005737">
    <property type="term" value="C:cytoplasm"/>
    <property type="evidence" value="ECO:0007669"/>
    <property type="project" value="UniProtKB-SubCell"/>
</dbReference>
<dbReference type="GO" id="GO:0005524">
    <property type="term" value="F:ATP binding"/>
    <property type="evidence" value="ECO:0007669"/>
    <property type="project" value="UniProtKB-KW"/>
</dbReference>
<dbReference type="GO" id="GO:0004636">
    <property type="term" value="F:phosphoribosyl-ATP diphosphatase activity"/>
    <property type="evidence" value="ECO:0007669"/>
    <property type="project" value="UniProtKB-UniRule"/>
</dbReference>
<dbReference type="GO" id="GO:0000105">
    <property type="term" value="P:L-histidine biosynthetic process"/>
    <property type="evidence" value="ECO:0007669"/>
    <property type="project" value="UniProtKB-UniRule"/>
</dbReference>
<dbReference type="CDD" id="cd11534">
    <property type="entry name" value="NTP-PPase_HisIE_like"/>
    <property type="match status" value="1"/>
</dbReference>
<dbReference type="FunFam" id="1.10.287.1080:FF:000002">
    <property type="entry name" value="Histidine biosynthesis bifunctional protein HisIE"/>
    <property type="match status" value="1"/>
</dbReference>
<dbReference type="Gene3D" id="1.10.287.1080">
    <property type="entry name" value="MazG-like"/>
    <property type="match status" value="1"/>
</dbReference>
<dbReference type="HAMAP" id="MF_01020">
    <property type="entry name" value="HisE"/>
    <property type="match status" value="1"/>
</dbReference>
<dbReference type="InterPro" id="IPR008179">
    <property type="entry name" value="HisE"/>
</dbReference>
<dbReference type="InterPro" id="IPR021130">
    <property type="entry name" value="PRib-ATP_PPHydrolase-like"/>
</dbReference>
<dbReference type="NCBIfam" id="TIGR03188">
    <property type="entry name" value="histidine_hisI"/>
    <property type="match status" value="1"/>
</dbReference>
<dbReference type="NCBIfam" id="NF001611">
    <property type="entry name" value="PRK00400.1-3"/>
    <property type="match status" value="1"/>
</dbReference>
<dbReference type="PANTHER" id="PTHR42945">
    <property type="entry name" value="HISTIDINE BIOSYNTHESIS BIFUNCTIONAL PROTEIN"/>
    <property type="match status" value="1"/>
</dbReference>
<dbReference type="PANTHER" id="PTHR42945:SF9">
    <property type="entry name" value="HISTIDINE BIOSYNTHESIS BIFUNCTIONAL PROTEIN HISIE"/>
    <property type="match status" value="1"/>
</dbReference>
<dbReference type="Pfam" id="PF01503">
    <property type="entry name" value="PRA-PH"/>
    <property type="match status" value="1"/>
</dbReference>
<dbReference type="SUPFAM" id="SSF101386">
    <property type="entry name" value="all-alpha NTP pyrophosphatases"/>
    <property type="match status" value="1"/>
</dbReference>
<feature type="chain" id="PRO_0000136364" description="Phosphoribosyl-ATP pyrophosphatase">
    <location>
        <begin position="1"/>
        <end position="92"/>
    </location>
</feature>
<keyword id="KW-0028">Amino-acid biosynthesis</keyword>
<keyword id="KW-0067">ATP-binding</keyword>
<keyword id="KW-0963">Cytoplasm</keyword>
<keyword id="KW-0368">Histidine biosynthesis</keyword>
<keyword id="KW-0378">Hydrolase</keyword>
<keyword id="KW-0547">Nucleotide-binding</keyword>
<sequence length="92" mass="10547">MEFLLQLENILKKRKQDLPDKSYTADLFRGGVDRILKKVGEEAGEVIIAAKNSDKKELTHEVADLLFHLQVLLVEQGLSLQEIVEELHKRHS</sequence>
<gene>
    <name evidence="1" type="primary">hisE</name>
    <name type="ordered locus">LIC_20062</name>
</gene>
<comment type="catalytic activity">
    <reaction evidence="1">
        <text>1-(5-phospho-beta-D-ribosyl)-ATP + H2O = 1-(5-phospho-beta-D-ribosyl)-5'-AMP + diphosphate + H(+)</text>
        <dbReference type="Rhea" id="RHEA:22828"/>
        <dbReference type="ChEBI" id="CHEBI:15377"/>
        <dbReference type="ChEBI" id="CHEBI:15378"/>
        <dbReference type="ChEBI" id="CHEBI:33019"/>
        <dbReference type="ChEBI" id="CHEBI:59457"/>
        <dbReference type="ChEBI" id="CHEBI:73183"/>
        <dbReference type="EC" id="3.6.1.31"/>
    </reaction>
</comment>
<comment type="pathway">
    <text evidence="1">Amino-acid biosynthesis; L-histidine biosynthesis; L-histidine from 5-phospho-alpha-D-ribose 1-diphosphate: step 2/9.</text>
</comment>
<comment type="subcellular location">
    <subcellularLocation>
        <location evidence="1">Cytoplasm</location>
    </subcellularLocation>
</comment>
<comment type="similarity">
    <text evidence="1">Belongs to the PRA-PH family.</text>
</comment>
<protein>
    <recommendedName>
        <fullName evidence="1">Phosphoribosyl-ATP pyrophosphatase</fullName>
        <shortName evidence="1">PRA-PH</shortName>
        <ecNumber evidence="1">3.6.1.31</ecNumber>
    </recommendedName>
</protein>
<organism>
    <name type="scientific">Leptospira interrogans serogroup Icterohaemorrhagiae serovar copenhageni (strain Fiocruz L1-130)</name>
    <dbReference type="NCBI Taxonomy" id="267671"/>
    <lineage>
        <taxon>Bacteria</taxon>
        <taxon>Pseudomonadati</taxon>
        <taxon>Spirochaetota</taxon>
        <taxon>Spirochaetia</taxon>
        <taxon>Leptospirales</taxon>
        <taxon>Leptospiraceae</taxon>
        <taxon>Leptospira</taxon>
    </lineage>
</organism>
<proteinExistence type="inferred from homology"/>
<evidence type="ECO:0000255" key="1">
    <source>
        <dbReference type="HAMAP-Rule" id="MF_01020"/>
    </source>
</evidence>